<name>THIM1_STRP7</name>
<reference key="1">
    <citation type="journal article" date="2010" name="Genome Biol.">
        <title>Structure and dynamics of the pan-genome of Streptococcus pneumoniae and closely related species.</title>
        <authorList>
            <person name="Donati C."/>
            <person name="Hiller N.L."/>
            <person name="Tettelin H."/>
            <person name="Muzzi A."/>
            <person name="Croucher N.J."/>
            <person name="Angiuoli S.V."/>
            <person name="Oggioni M."/>
            <person name="Dunning Hotopp J.C."/>
            <person name="Hu F.Z."/>
            <person name="Riley D.R."/>
            <person name="Covacci A."/>
            <person name="Mitchell T.J."/>
            <person name="Bentley S.D."/>
            <person name="Kilian M."/>
            <person name="Ehrlich G.D."/>
            <person name="Rappuoli R."/>
            <person name="Moxon E.R."/>
            <person name="Masignani V."/>
        </authorList>
    </citation>
    <scope>NUCLEOTIDE SEQUENCE [LARGE SCALE GENOMIC DNA]</scope>
    <source>
        <strain>70585</strain>
    </source>
</reference>
<keyword id="KW-0067">ATP-binding</keyword>
<keyword id="KW-0418">Kinase</keyword>
<keyword id="KW-0460">Magnesium</keyword>
<keyword id="KW-0479">Metal-binding</keyword>
<keyword id="KW-0547">Nucleotide-binding</keyword>
<keyword id="KW-0784">Thiamine biosynthesis</keyword>
<keyword id="KW-0808">Transferase</keyword>
<feature type="chain" id="PRO_1000198130" description="Hydroxyethylthiazole kinase 1">
    <location>
        <begin position="1"/>
        <end position="260"/>
    </location>
</feature>
<feature type="binding site" evidence="1">
    <location>
        <position position="39"/>
    </location>
    <ligand>
        <name>substrate</name>
    </ligand>
</feature>
<feature type="binding site" evidence="1">
    <location>
        <position position="115"/>
    </location>
    <ligand>
        <name>ATP</name>
        <dbReference type="ChEBI" id="CHEBI:30616"/>
    </ligand>
</feature>
<feature type="binding site" evidence="1">
    <location>
        <position position="160"/>
    </location>
    <ligand>
        <name>ATP</name>
        <dbReference type="ChEBI" id="CHEBI:30616"/>
    </ligand>
</feature>
<feature type="binding site" evidence="1">
    <location>
        <position position="187"/>
    </location>
    <ligand>
        <name>substrate</name>
    </ligand>
</feature>
<dbReference type="EC" id="2.7.1.50" evidence="1"/>
<dbReference type="EMBL" id="CP000918">
    <property type="protein sequence ID" value="ACO16268.1"/>
    <property type="molecule type" value="Genomic_DNA"/>
</dbReference>
<dbReference type="SMR" id="C1C666"/>
<dbReference type="KEGG" id="snm:SP70585_0764"/>
<dbReference type="HOGENOM" id="CLU_019943_0_2_9"/>
<dbReference type="UniPathway" id="UPA00060">
    <property type="reaction ID" value="UER00139"/>
</dbReference>
<dbReference type="Proteomes" id="UP000002211">
    <property type="component" value="Chromosome"/>
</dbReference>
<dbReference type="GO" id="GO:0005524">
    <property type="term" value="F:ATP binding"/>
    <property type="evidence" value="ECO:0007669"/>
    <property type="project" value="UniProtKB-UniRule"/>
</dbReference>
<dbReference type="GO" id="GO:0004417">
    <property type="term" value="F:hydroxyethylthiazole kinase activity"/>
    <property type="evidence" value="ECO:0007669"/>
    <property type="project" value="UniProtKB-UniRule"/>
</dbReference>
<dbReference type="GO" id="GO:0000287">
    <property type="term" value="F:magnesium ion binding"/>
    <property type="evidence" value="ECO:0007669"/>
    <property type="project" value="UniProtKB-UniRule"/>
</dbReference>
<dbReference type="GO" id="GO:0009228">
    <property type="term" value="P:thiamine biosynthetic process"/>
    <property type="evidence" value="ECO:0007669"/>
    <property type="project" value="UniProtKB-KW"/>
</dbReference>
<dbReference type="GO" id="GO:0009229">
    <property type="term" value="P:thiamine diphosphate biosynthetic process"/>
    <property type="evidence" value="ECO:0007669"/>
    <property type="project" value="UniProtKB-UniRule"/>
</dbReference>
<dbReference type="CDD" id="cd01170">
    <property type="entry name" value="THZ_kinase"/>
    <property type="match status" value="1"/>
</dbReference>
<dbReference type="Gene3D" id="3.40.1190.20">
    <property type="match status" value="1"/>
</dbReference>
<dbReference type="HAMAP" id="MF_00228">
    <property type="entry name" value="Thz_kinase"/>
    <property type="match status" value="1"/>
</dbReference>
<dbReference type="InterPro" id="IPR000417">
    <property type="entry name" value="Hyethyz_kinase"/>
</dbReference>
<dbReference type="InterPro" id="IPR029056">
    <property type="entry name" value="Ribokinase-like"/>
</dbReference>
<dbReference type="NCBIfam" id="NF006830">
    <property type="entry name" value="PRK09355.1"/>
    <property type="match status" value="1"/>
</dbReference>
<dbReference type="NCBIfam" id="TIGR00694">
    <property type="entry name" value="thiM"/>
    <property type="match status" value="1"/>
</dbReference>
<dbReference type="Pfam" id="PF02110">
    <property type="entry name" value="HK"/>
    <property type="match status" value="1"/>
</dbReference>
<dbReference type="PIRSF" id="PIRSF000513">
    <property type="entry name" value="Thz_kinase"/>
    <property type="match status" value="1"/>
</dbReference>
<dbReference type="PRINTS" id="PR01099">
    <property type="entry name" value="HYETHTZKNASE"/>
</dbReference>
<dbReference type="SUPFAM" id="SSF53613">
    <property type="entry name" value="Ribokinase-like"/>
    <property type="match status" value="1"/>
</dbReference>
<accession>C1C666</accession>
<organism>
    <name type="scientific">Streptococcus pneumoniae (strain 70585)</name>
    <dbReference type="NCBI Taxonomy" id="488221"/>
    <lineage>
        <taxon>Bacteria</taxon>
        <taxon>Bacillati</taxon>
        <taxon>Bacillota</taxon>
        <taxon>Bacilli</taxon>
        <taxon>Lactobacillales</taxon>
        <taxon>Streptococcaceae</taxon>
        <taxon>Streptococcus</taxon>
    </lineage>
</organism>
<evidence type="ECO:0000255" key="1">
    <source>
        <dbReference type="HAMAP-Rule" id="MF_00228"/>
    </source>
</evidence>
<gene>
    <name evidence="1" type="primary">thiM1</name>
    <name type="ordered locus">SP70585_0764</name>
</gene>
<proteinExistence type="inferred from homology"/>
<comment type="function">
    <text evidence="1">Catalyzes the phosphorylation of the hydroxyl group of 4-methyl-5-beta-hydroxyethylthiazole (THZ).</text>
</comment>
<comment type="catalytic activity">
    <reaction evidence="1">
        <text>5-(2-hydroxyethyl)-4-methylthiazole + ATP = 4-methyl-5-(2-phosphooxyethyl)-thiazole + ADP + H(+)</text>
        <dbReference type="Rhea" id="RHEA:24212"/>
        <dbReference type="ChEBI" id="CHEBI:15378"/>
        <dbReference type="ChEBI" id="CHEBI:17957"/>
        <dbReference type="ChEBI" id="CHEBI:30616"/>
        <dbReference type="ChEBI" id="CHEBI:58296"/>
        <dbReference type="ChEBI" id="CHEBI:456216"/>
        <dbReference type="EC" id="2.7.1.50"/>
    </reaction>
</comment>
<comment type="cofactor">
    <cofactor evidence="1">
        <name>Mg(2+)</name>
        <dbReference type="ChEBI" id="CHEBI:18420"/>
    </cofactor>
</comment>
<comment type="pathway">
    <text evidence="1">Cofactor biosynthesis; thiamine diphosphate biosynthesis; 4-methyl-5-(2-phosphoethyl)-thiazole from 5-(2-hydroxyethyl)-4-methylthiazole: step 1/1.</text>
</comment>
<comment type="similarity">
    <text evidence="1">Belongs to the Thz kinase family.</text>
</comment>
<protein>
    <recommendedName>
        <fullName evidence="1">Hydroxyethylthiazole kinase 1</fullName>
        <ecNumber evidence="1">2.7.1.50</ecNumber>
    </recommendedName>
    <alternativeName>
        <fullName evidence="1">4-methyl-5-beta-hydroxyethylthiazole kinase 1</fullName>
        <shortName evidence="1">TH kinase 1</shortName>
        <shortName evidence="1">Thz kinase 1</shortName>
    </alternativeName>
</protein>
<sequence>MTSLKLLKEKAPLVICITNDVVKNFTANGLVALGASPAMSEFPADLEDLLKYAGGLLINIGTLTDENWKLYQAALKIAEKYNVPAVLDPVACGAGEYRKKVADDLINNYKLAAIRGNAGEIASLVGIDVASKGVDSAGVDNIDEIALAANEKFNIPIVVTGEVDAIAVNGEVVTIHNGSAMMPKVIGTGCLLGAVIASFIGLEKGQELKSLETAMLVYNIAGEMAEKRPNGHLPGTFKVEFINALYEITDEDVKEFKRVK</sequence>